<feature type="chain" id="PRO_0000254637" description="Protein FAM162A">
    <location>
        <begin position="1"/>
        <end position="154"/>
    </location>
</feature>
<feature type="transmembrane region" description="Helical" evidence="3">
    <location>
        <begin position="103"/>
        <end position="120"/>
    </location>
</feature>
<feature type="region of interest" description="Required for proapoptotic activity" evidence="2">
    <location>
        <begin position="76"/>
        <end position="102"/>
    </location>
</feature>
<proteinExistence type="evidence at transcript level"/>
<evidence type="ECO:0000250" key="1">
    <source>
        <dbReference type="UniProtKB" id="Q96A26"/>
    </source>
</evidence>
<evidence type="ECO:0000250" key="2">
    <source>
        <dbReference type="UniProtKB" id="Q9D6U8"/>
    </source>
</evidence>
<evidence type="ECO:0000255" key="3"/>
<evidence type="ECO:0000305" key="4"/>
<organism>
    <name type="scientific">Pongo abelii</name>
    <name type="common">Sumatran orangutan</name>
    <name type="synonym">Pongo pygmaeus abelii</name>
    <dbReference type="NCBI Taxonomy" id="9601"/>
    <lineage>
        <taxon>Eukaryota</taxon>
        <taxon>Metazoa</taxon>
        <taxon>Chordata</taxon>
        <taxon>Craniata</taxon>
        <taxon>Vertebrata</taxon>
        <taxon>Euteleostomi</taxon>
        <taxon>Mammalia</taxon>
        <taxon>Eutheria</taxon>
        <taxon>Euarchontoglires</taxon>
        <taxon>Primates</taxon>
        <taxon>Haplorrhini</taxon>
        <taxon>Catarrhini</taxon>
        <taxon>Hominidae</taxon>
        <taxon>Pongo</taxon>
    </lineage>
</organism>
<sequence>MGSLSGLRLAAGSCFRLCERDVFSSLRLTRSSDLKRINGFCTKPQESPRAPSRTYNRVPLHKPTEWQKKILVWSGRFKKEDEIPETVSLEMLDTAKNKMRVKISYLMIALTVVGCICMVIEGKKAAQRHESLTSLNLEKKARLREEAAMKAKTE</sequence>
<keyword id="KW-0053">Apoptosis</keyword>
<keyword id="KW-0472">Membrane</keyword>
<keyword id="KW-0496">Mitochondrion</keyword>
<keyword id="KW-1185">Reference proteome</keyword>
<keyword id="KW-0812">Transmembrane</keyword>
<keyword id="KW-1133">Transmembrane helix</keyword>
<comment type="function">
    <text evidence="2">Proposed to be involved in regulation of apoptosis; the exact mechanism may differ between cell types/tissues. May be involved in hypoxia-induced cell death of transformed cells implicating cytochrome C release and caspase activation (such as CASP9) and inducing mitochondrial permeability transition. May be involved in hypoxia-induced cell death of neuronal cells probably by promoting release of AIFM1 from mitochondria to cytoplasm and its translocation to the nucleus; however, the involvement of caspases has been reported conflictingly.</text>
</comment>
<comment type="subunit">
    <text evidence="1">Interacts with HSP90AB1; HSP90AB1 is essential for FAM162A mitochondrial localization and pro-apoptotic activity. Interacts with VDAC2; the interaction is probably involved in inducing mitochondrial permeability transition.</text>
</comment>
<comment type="subcellular location">
    <subcellularLocation>
        <location evidence="1">Mitochondrion membrane</location>
        <topology evidence="4">Single-pass membrane protein</topology>
    </subcellularLocation>
</comment>
<comment type="similarity">
    <text evidence="4">Belongs to the UPF0389 family.</text>
</comment>
<name>F162A_PONAB</name>
<dbReference type="EMBL" id="CR861081">
    <property type="protein sequence ID" value="CAH93162.1"/>
    <property type="molecule type" value="mRNA"/>
</dbReference>
<dbReference type="RefSeq" id="NP_001126865.1">
    <property type="nucleotide sequence ID" value="NM_001133393.1"/>
</dbReference>
<dbReference type="SMR" id="Q5R504"/>
<dbReference type="FunCoup" id="Q5R504">
    <property type="interactions" value="1804"/>
</dbReference>
<dbReference type="STRING" id="9601.ENSPPYP00000015084"/>
<dbReference type="Ensembl" id="ENSPPYT00000015686.2">
    <property type="protein sequence ID" value="ENSPPYP00000015084.1"/>
    <property type="gene ID" value="ENSPPYG00000013485.2"/>
</dbReference>
<dbReference type="GeneID" id="100173874"/>
<dbReference type="KEGG" id="pon:100173874"/>
<dbReference type="CTD" id="26355"/>
<dbReference type="eggNOG" id="ENOG502S1PN">
    <property type="taxonomic scope" value="Eukaryota"/>
</dbReference>
<dbReference type="GeneTree" id="ENSGT00640000091497"/>
<dbReference type="HOGENOM" id="CLU_122911_0_0_1"/>
<dbReference type="InParanoid" id="Q5R504"/>
<dbReference type="OMA" id="GMCNKLP"/>
<dbReference type="OrthoDB" id="8193498at2759"/>
<dbReference type="TreeFam" id="TF323771"/>
<dbReference type="Proteomes" id="UP000001595">
    <property type="component" value="Chromosome 3"/>
</dbReference>
<dbReference type="GO" id="GO:0005829">
    <property type="term" value="C:cytosol"/>
    <property type="evidence" value="ECO:0007669"/>
    <property type="project" value="Ensembl"/>
</dbReference>
<dbReference type="GO" id="GO:0031966">
    <property type="term" value="C:mitochondrial membrane"/>
    <property type="evidence" value="ECO:0007669"/>
    <property type="project" value="UniProtKB-SubCell"/>
</dbReference>
<dbReference type="GO" id="GO:0071456">
    <property type="term" value="P:cellular response to hypoxia"/>
    <property type="evidence" value="ECO:0000250"/>
    <property type="project" value="UniProtKB"/>
</dbReference>
<dbReference type="GO" id="GO:0051402">
    <property type="term" value="P:neuron apoptotic process"/>
    <property type="evidence" value="ECO:0007669"/>
    <property type="project" value="Ensembl"/>
</dbReference>
<dbReference type="GO" id="GO:0043065">
    <property type="term" value="P:positive regulation of apoptotic process"/>
    <property type="evidence" value="ECO:0000250"/>
    <property type="project" value="UniProtKB"/>
</dbReference>
<dbReference type="GO" id="GO:0090200">
    <property type="term" value="P:positive regulation of release of cytochrome c from mitochondria"/>
    <property type="evidence" value="ECO:0000250"/>
    <property type="project" value="UniProtKB"/>
</dbReference>
<dbReference type="InterPro" id="IPR009432">
    <property type="entry name" value="DUF1075"/>
</dbReference>
<dbReference type="PANTHER" id="PTHR13674">
    <property type="entry name" value="GROWTH AND TRANSFORMATION-DEPENDENT PROTEIN"/>
    <property type="match status" value="1"/>
</dbReference>
<dbReference type="PANTHER" id="PTHR13674:SF2">
    <property type="entry name" value="PROTEIN FAM162A"/>
    <property type="match status" value="1"/>
</dbReference>
<dbReference type="Pfam" id="PF06388">
    <property type="entry name" value="DUF1075"/>
    <property type="match status" value="1"/>
</dbReference>
<reference key="1">
    <citation type="submission" date="2004-11" db="EMBL/GenBank/DDBJ databases">
        <authorList>
            <consortium name="The German cDNA consortium"/>
        </authorList>
    </citation>
    <scope>NUCLEOTIDE SEQUENCE [LARGE SCALE MRNA]</scope>
    <source>
        <tissue>Brain cortex</tissue>
    </source>
</reference>
<accession>Q5R504</accession>
<gene>
    <name type="primary">FAM162A</name>
    <name type="synonym">E2IG5</name>
</gene>
<protein>
    <recommendedName>
        <fullName>Protein FAM162A</fullName>
    </recommendedName>
    <alternativeName>
        <fullName>E2-induced gene 5 protein homolog</fullName>
    </alternativeName>
</protein>